<reference evidence="6" key="1">
    <citation type="submission" date="2006-08" db="EMBL/GenBank/DDBJ databases">
        <title>cDNA clone of peanut seed storage protein gene.</title>
        <authorList>
            <person name="Yan Y."/>
            <person name="Wang L."/>
            <person name="Huang S."/>
        </authorList>
    </citation>
    <scope>NUCLEOTIDE SEQUENCE [MRNA]</scope>
</reference>
<reference evidence="7" key="2">
    <citation type="submission" date="2007-06" db="EMBL/GenBank/DDBJ databases">
        <title>Cloning and characterization of four genes encoding peanut seed oleosins.</title>
        <authorList>
            <person name="Li C."/>
            <person name="Fu G."/>
            <person name="Zhong Y."/>
            <person name="Yan Y."/>
            <person name="Wang L."/>
            <person name="Huang S."/>
        </authorList>
    </citation>
    <scope>NUCLEOTIDE SEQUENCE [GENOMIC DNA]</scope>
</reference>
<reference evidence="8 9" key="3">
    <citation type="submission" date="2019-01" db="EMBL/GenBank/DDBJ databases">
        <title>Sequencing of cultivated peanut Arachis hypogaea provides insights into genome evolution and oil improvement.</title>
        <authorList>
            <person name="Chen X."/>
        </authorList>
    </citation>
    <scope>NUCLEOTIDE SEQUENCE [LARGE SCALE GENOMIC DNA]</scope>
    <source>
        <strain evidence="9">cv. Fuhuasheng</strain>
        <tissue evidence="8">Leaf</tissue>
    </source>
</reference>
<reference key="4">
    <citation type="journal article" date="2015" name="PLoS ONE">
        <title>Development of a novel strategy to isolate lipophilic allergens (oleosins) from peanuts.</title>
        <authorList>
            <person name="Schwager C."/>
            <person name="Kull S."/>
            <person name="Krause S."/>
            <person name="Schocker F."/>
            <person name="Petersen A."/>
            <person name="Becker W.M."/>
            <person name="Jappe U."/>
        </authorList>
    </citation>
    <scope>PROTEIN SEQUENCE OF 5-38; 118-131; 134-144 AND 154-168</scope>
    <scope>SUBCELLULAR LOCATION</scope>
    <scope>TISSUE SPECIFICITY</scope>
    <scope>IDENTIFICATION BY MASS SPECTROMETRY</scope>
    <scope>ALLERGEN</scope>
    <source>
        <tissue evidence="4">Seed</tissue>
    </source>
</reference>
<comment type="function">
    <text evidence="5">May have a structural role to stabilize the lipid body during desiccation of the seed by preventing coalescence of the oil. Probably interacts with both lipid and phospholipid moieties of lipid bodies. May also provide recognition signals for specific lipase anchorage in lipolysis during seedling growth.</text>
</comment>
<comment type="subcellular location">
    <subcellularLocation>
        <location evidence="3">Lipid droplet</location>
    </subcellularLocation>
    <subcellularLocation>
        <location evidence="1">Membrane</location>
        <topology evidence="1">Multi-pass membrane protein</topology>
    </subcellularLocation>
    <text evidence="5">Surface of oil bodies. Oleosins exist at a monolayer lipid/water interface.</text>
</comment>
<comment type="tissue specificity">
    <text evidence="3">Expressed in seeds (at protein level).</text>
</comment>
<comment type="allergen">
    <text evidence="3">Causes an allergic reaction in human. Pooled with Ara h 11 binds to IgE in 75% of the 4 peanut-allergic patients tested.</text>
</comment>
<comment type="similarity">
    <text evidence="5">Belongs to the oleosin family.</text>
</comment>
<gene>
    <name evidence="8" type="ORF">Ahy_A06g029932</name>
</gene>
<protein>
    <recommendedName>
        <fullName evidence="5">Oleosin Ara h 10.0101</fullName>
    </recommendedName>
    <allergenName evidence="4">Ara h 10.0101</allergenName>
</protein>
<proteinExistence type="evidence at protein level"/>
<keyword id="KW-0020">Allergen</keyword>
<keyword id="KW-0903">Direct protein sequencing</keyword>
<keyword id="KW-0551">Lipid droplet</keyword>
<keyword id="KW-0472">Membrane</keyword>
<keyword id="KW-1185">Reference proteome</keyword>
<keyword id="KW-0812">Transmembrane</keyword>
<keyword id="KW-1133">Transmembrane helix</keyword>
<organism evidence="6">
    <name type="scientific">Arachis hypogaea</name>
    <name type="common">Peanut</name>
    <dbReference type="NCBI Taxonomy" id="3818"/>
    <lineage>
        <taxon>Eukaryota</taxon>
        <taxon>Viridiplantae</taxon>
        <taxon>Streptophyta</taxon>
        <taxon>Embryophyta</taxon>
        <taxon>Tracheophyta</taxon>
        <taxon>Spermatophyta</taxon>
        <taxon>Magnoliopsida</taxon>
        <taxon>eudicotyledons</taxon>
        <taxon>Gunneridae</taxon>
        <taxon>Pentapetalae</taxon>
        <taxon>rosids</taxon>
        <taxon>fabids</taxon>
        <taxon>Fabales</taxon>
        <taxon>Fabaceae</taxon>
        <taxon>Papilionoideae</taxon>
        <taxon>50 kb inversion clade</taxon>
        <taxon>dalbergioids sensu lato</taxon>
        <taxon>Dalbergieae</taxon>
        <taxon>Pterocarpus clade</taxon>
        <taxon>Arachis</taxon>
    </lineage>
</organism>
<feature type="chain" id="PRO_0000449839" description="Oleosin Ara h 10.0101">
    <location>
        <begin position="1"/>
        <end position="169"/>
    </location>
</feature>
<feature type="transmembrane region" description="Helical" evidence="1">
    <location>
        <begin position="39"/>
        <end position="59"/>
    </location>
</feature>
<feature type="transmembrane region" description="Helical" evidence="1">
    <location>
        <begin position="73"/>
        <end position="93"/>
    </location>
</feature>
<feature type="region of interest" description="Disordered" evidence="2">
    <location>
        <begin position="146"/>
        <end position="169"/>
    </location>
</feature>
<feature type="compositionally biased region" description="Basic and acidic residues" evidence="2">
    <location>
        <begin position="146"/>
        <end position="156"/>
    </location>
</feature>
<accession>Q647G5</accession>
<evidence type="ECO:0000255" key="1"/>
<evidence type="ECO:0000256" key="2">
    <source>
        <dbReference type="SAM" id="MobiDB-lite"/>
    </source>
</evidence>
<evidence type="ECO:0000269" key="3">
    <source>
    </source>
</evidence>
<evidence type="ECO:0000303" key="4">
    <source>
    </source>
</evidence>
<evidence type="ECO:0000305" key="5"/>
<evidence type="ECO:0000312" key="6">
    <source>
        <dbReference type="EMBL" id="AAU21499.2"/>
    </source>
</evidence>
<evidence type="ECO:0000312" key="7">
    <source>
        <dbReference type="EMBL" id="ABS28870.1"/>
    </source>
</evidence>
<evidence type="ECO:0000312" key="8">
    <source>
        <dbReference type="EMBL" id="RYR54624.1"/>
    </source>
</evidence>
<evidence type="ECO:0000312" key="9">
    <source>
        <dbReference type="Proteomes" id="UP000289738"/>
    </source>
</evidence>
<sequence>MTDRTQPHTVQVHTTAGRFGDTAAGTNRYPDRGPSTSKVIAVITGLPIGGTLLLFAGLALAGTLLGLAVTTPLFILFSPVIVPAIIVVGLSVAGFLTSGACGLTGLSSFSWVMNYIRQTHGSVPEQLEMAKHRMADVAGYVGQKTKDVGQKTKEVGQEIQTKAQDSKRT</sequence>
<name>OL101_ARAHY</name>
<dbReference type="EMBL" id="AY722694">
    <property type="protein sequence ID" value="AAU21499.2"/>
    <property type="molecule type" value="mRNA"/>
</dbReference>
<dbReference type="EMBL" id="EF695400">
    <property type="protein sequence ID" value="ABS28870.1"/>
    <property type="molecule type" value="Genomic_DNA"/>
</dbReference>
<dbReference type="EMBL" id="SDMP01000006">
    <property type="protein sequence ID" value="RYR54624.1"/>
    <property type="molecule type" value="Genomic_DNA"/>
</dbReference>
<dbReference type="SMR" id="Q647G5"/>
<dbReference type="STRING" id="3818.Q647G5"/>
<dbReference type="Allergome" id="5758">
    <property type="allergen name" value="Ara h 10"/>
</dbReference>
<dbReference type="Allergome" id="5759">
    <property type="allergen name" value="Ara h 10.0101"/>
</dbReference>
<dbReference type="EnsemblPlants" id="arahy.Tifrunner.gnm2.ann2.Ah06g345700.1">
    <property type="protein sequence ID" value="arahy.Tifrunner.gnm2.ann2.Ah06g345700.1-CDS-1"/>
    <property type="gene ID" value="arahy.Tifrunner.gnm2.ann2.Ah06g345700"/>
</dbReference>
<dbReference type="Gramene" id="arahy.Tifrunner.gnm2.ann2.Ah06g345700.1">
    <property type="protein sequence ID" value="arahy.Tifrunner.gnm2.ann2.Ah06g345700.1-CDS-1"/>
    <property type="gene ID" value="arahy.Tifrunner.gnm2.ann2.Ah06g345700"/>
</dbReference>
<dbReference type="OrthoDB" id="1929188at2759"/>
<dbReference type="Proteomes" id="UP000289738">
    <property type="component" value="Chromosome A06"/>
</dbReference>
<dbReference type="GO" id="GO:0016020">
    <property type="term" value="C:membrane"/>
    <property type="evidence" value="ECO:0007669"/>
    <property type="project" value="UniProtKB-SubCell"/>
</dbReference>
<dbReference type="GO" id="GO:0012511">
    <property type="term" value="C:monolayer-surrounded lipid storage body"/>
    <property type="evidence" value="ECO:0007669"/>
    <property type="project" value="InterPro"/>
</dbReference>
<dbReference type="GO" id="GO:0019915">
    <property type="term" value="P:lipid storage"/>
    <property type="evidence" value="ECO:0007669"/>
    <property type="project" value="TreeGrafter"/>
</dbReference>
<dbReference type="GO" id="GO:0050826">
    <property type="term" value="P:response to freezing"/>
    <property type="evidence" value="ECO:0007669"/>
    <property type="project" value="TreeGrafter"/>
</dbReference>
<dbReference type="GO" id="GO:0010344">
    <property type="term" value="P:seed oilbody biogenesis"/>
    <property type="evidence" value="ECO:0007669"/>
    <property type="project" value="TreeGrafter"/>
</dbReference>
<dbReference type="InterPro" id="IPR000136">
    <property type="entry name" value="Oleosin"/>
</dbReference>
<dbReference type="PANTHER" id="PTHR33203">
    <property type="entry name" value="OLEOSIN"/>
    <property type="match status" value="1"/>
</dbReference>
<dbReference type="PANTHER" id="PTHR33203:SF44">
    <property type="entry name" value="OLEOSIN 20.3 KDA"/>
    <property type="match status" value="1"/>
</dbReference>
<dbReference type="Pfam" id="PF01277">
    <property type="entry name" value="Oleosin"/>
    <property type="match status" value="1"/>
</dbReference>